<name>RS3_PARPJ</name>
<comment type="function">
    <text evidence="1">Binds the lower part of the 30S subunit head. Binds mRNA in the 70S ribosome, positioning it for translation.</text>
</comment>
<comment type="subunit">
    <text evidence="1">Part of the 30S ribosomal subunit. Forms a tight complex with proteins S10 and S14.</text>
</comment>
<comment type="similarity">
    <text evidence="1">Belongs to the universal ribosomal protein uS3 family.</text>
</comment>
<proteinExistence type="inferred from homology"/>
<accession>B2T745</accession>
<evidence type="ECO:0000255" key="1">
    <source>
        <dbReference type="HAMAP-Rule" id="MF_01309"/>
    </source>
</evidence>
<evidence type="ECO:0000256" key="2">
    <source>
        <dbReference type="SAM" id="MobiDB-lite"/>
    </source>
</evidence>
<evidence type="ECO:0000305" key="3"/>
<gene>
    <name evidence="1" type="primary">rpsC</name>
    <name type="ordered locus">Bphyt_3638</name>
</gene>
<organism>
    <name type="scientific">Paraburkholderia phytofirmans (strain DSM 17436 / LMG 22146 / PsJN)</name>
    <name type="common">Burkholderia phytofirmans</name>
    <dbReference type="NCBI Taxonomy" id="398527"/>
    <lineage>
        <taxon>Bacteria</taxon>
        <taxon>Pseudomonadati</taxon>
        <taxon>Pseudomonadota</taxon>
        <taxon>Betaproteobacteria</taxon>
        <taxon>Burkholderiales</taxon>
        <taxon>Burkholderiaceae</taxon>
        <taxon>Paraburkholderia</taxon>
    </lineage>
</organism>
<feature type="chain" id="PRO_1000140935" description="Small ribosomal subunit protein uS3">
    <location>
        <begin position="1"/>
        <end position="268"/>
    </location>
</feature>
<feature type="domain" description="KH type-2" evidence="1">
    <location>
        <begin position="39"/>
        <end position="107"/>
    </location>
</feature>
<feature type="region of interest" description="Disordered" evidence="2">
    <location>
        <begin position="216"/>
        <end position="268"/>
    </location>
</feature>
<feature type="compositionally biased region" description="Basic and acidic residues" evidence="2">
    <location>
        <begin position="232"/>
        <end position="242"/>
    </location>
</feature>
<feature type="compositionally biased region" description="Low complexity" evidence="2">
    <location>
        <begin position="248"/>
        <end position="257"/>
    </location>
</feature>
<feature type="compositionally biased region" description="Gly residues" evidence="2">
    <location>
        <begin position="258"/>
        <end position="268"/>
    </location>
</feature>
<protein>
    <recommendedName>
        <fullName evidence="1">Small ribosomal subunit protein uS3</fullName>
    </recommendedName>
    <alternativeName>
        <fullName evidence="3">30S ribosomal protein S3</fullName>
    </alternativeName>
</protein>
<reference key="1">
    <citation type="journal article" date="2011" name="J. Bacteriol.">
        <title>Complete genome sequence of the plant growth-promoting endophyte Burkholderia phytofirmans strain PsJN.</title>
        <authorList>
            <person name="Weilharter A."/>
            <person name="Mitter B."/>
            <person name="Shin M.V."/>
            <person name="Chain P.S."/>
            <person name="Nowak J."/>
            <person name="Sessitsch A."/>
        </authorList>
    </citation>
    <scope>NUCLEOTIDE SEQUENCE [LARGE SCALE GENOMIC DNA]</scope>
    <source>
        <strain>DSM 17436 / LMG 22146 / PsJN</strain>
    </source>
</reference>
<dbReference type="EMBL" id="CP001052">
    <property type="protein sequence ID" value="ACD18028.1"/>
    <property type="molecule type" value="Genomic_DNA"/>
</dbReference>
<dbReference type="RefSeq" id="WP_012434570.1">
    <property type="nucleotide sequence ID" value="NC_010681.1"/>
</dbReference>
<dbReference type="SMR" id="B2T745"/>
<dbReference type="STRING" id="398527.Bphyt_3638"/>
<dbReference type="GeneID" id="97310998"/>
<dbReference type="KEGG" id="bpy:Bphyt_3638"/>
<dbReference type="eggNOG" id="COG0092">
    <property type="taxonomic scope" value="Bacteria"/>
</dbReference>
<dbReference type="HOGENOM" id="CLU_058591_0_1_4"/>
<dbReference type="OrthoDB" id="9806396at2"/>
<dbReference type="Proteomes" id="UP000001739">
    <property type="component" value="Chromosome 1"/>
</dbReference>
<dbReference type="GO" id="GO:0022627">
    <property type="term" value="C:cytosolic small ribosomal subunit"/>
    <property type="evidence" value="ECO:0007669"/>
    <property type="project" value="TreeGrafter"/>
</dbReference>
<dbReference type="GO" id="GO:0003729">
    <property type="term" value="F:mRNA binding"/>
    <property type="evidence" value="ECO:0007669"/>
    <property type="project" value="UniProtKB-UniRule"/>
</dbReference>
<dbReference type="GO" id="GO:0019843">
    <property type="term" value="F:rRNA binding"/>
    <property type="evidence" value="ECO:0007669"/>
    <property type="project" value="UniProtKB-UniRule"/>
</dbReference>
<dbReference type="GO" id="GO:0003735">
    <property type="term" value="F:structural constituent of ribosome"/>
    <property type="evidence" value="ECO:0007669"/>
    <property type="project" value="InterPro"/>
</dbReference>
<dbReference type="GO" id="GO:0006412">
    <property type="term" value="P:translation"/>
    <property type="evidence" value="ECO:0007669"/>
    <property type="project" value="UniProtKB-UniRule"/>
</dbReference>
<dbReference type="CDD" id="cd02412">
    <property type="entry name" value="KH-II_30S_S3"/>
    <property type="match status" value="1"/>
</dbReference>
<dbReference type="FunFam" id="3.30.1140.32:FF:000006">
    <property type="entry name" value="30S ribosomal protein S3"/>
    <property type="match status" value="1"/>
</dbReference>
<dbReference type="FunFam" id="3.30.300.20:FF:000001">
    <property type="entry name" value="30S ribosomal protein S3"/>
    <property type="match status" value="1"/>
</dbReference>
<dbReference type="Gene3D" id="3.30.300.20">
    <property type="match status" value="1"/>
</dbReference>
<dbReference type="Gene3D" id="3.30.1140.32">
    <property type="entry name" value="Ribosomal protein S3, C-terminal domain"/>
    <property type="match status" value="1"/>
</dbReference>
<dbReference type="HAMAP" id="MF_01309_B">
    <property type="entry name" value="Ribosomal_uS3_B"/>
    <property type="match status" value="1"/>
</dbReference>
<dbReference type="InterPro" id="IPR004087">
    <property type="entry name" value="KH_dom"/>
</dbReference>
<dbReference type="InterPro" id="IPR015946">
    <property type="entry name" value="KH_dom-like_a/b"/>
</dbReference>
<dbReference type="InterPro" id="IPR004044">
    <property type="entry name" value="KH_dom_type_2"/>
</dbReference>
<dbReference type="InterPro" id="IPR009019">
    <property type="entry name" value="KH_sf_prok-type"/>
</dbReference>
<dbReference type="InterPro" id="IPR036419">
    <property type="entry name" value="Ribosomal_S3_C_sf"/>
</dbReference>
<dbReference type="InterPro" id="IPR005704">
    <property type="entry name" value="Ribosomal_uS3_bac-typ"/>
</dbReference>
<dbReference type="InterPro" id="IPR001351">
    <property type="entry name" value="Ribosomal_uS3_C"/>
</dbReference>
<dbReference type="InterPro" id="IPR018280">
    <property type="entry name" value="Ribosomal_uS3_CS"/>
</dbReference>
<dbReference type="NCBIfam" id="TIGR01009">
    <property type="entry name" value="rpsC_bact"/>
    <property type="match status" value="1"/>
</dbReference>
<dbReference type="PANTHER" id="PTHR11760">
    <property type="entry name" value="30S/40S RIBOSOMAL PROTEIN S3"/>
    <property type="match status" value="1"/>
</dbReference>
<dbReference type="PANTHER" id="PTHR11760:SF19">
    <property type="entry name" value="SMALL RIBOSOMAL SUBUNIT PROTEIN US3C"/>
    <property type="match status" value="1"/>
</dbReference>
<dbReference type="Pfam" id="PF07650">
    <property type="entry name" value="KH_2"/>
    <property type="match status" value="1"/>
</dbReference>
<dbReference type="Pfam" id="PF00189">
    <property type="entry name" value="Ribosomal_S3_C"/>
    <property type="match status" value="1"/>
</dbReference>
<dbReference type="SMART" id="SM00322">
    <property type="entry name" value="KH"/>
    <property type="match status" value="1"/>
</dbReference>
<dbReference type="SUPFAM" id="SSF54814">
    <property type="entry name" value="Prokaryotic type KH domain (KH-domain type II)"/>
    <property type="match status" value="1"/>
</dbReference>
<dbReference type="SUPFAM" id="SSF54821">
    <property type="entry name" value="Ribosomal protein S3 C-terminal domain"/>
    <property type="match status" value="1"/>
</dbReference>
<dbReference type="PROSITE" id="PS50823">
    <property type="entry name" value="KH_TYPE_2"/>
    <property type="match status" value="1"/>
</dbReference>
<dbReference type="PROSITE" id="PS00548">
    <property type="entry name" value="RIBOSOMAL_S3"/>
    <property type="match status" value="1"/>
</dbReference>
<keyword id="KW-0687">Ribonucleoprotein</keyword>
<keyword id="KW-0689">Ribosomal protein</keyword>
<keyword id="KW-0694">RNA-binding</keyword>
<keyword id="KW-0699">rRNA-binding</keyword>
<sequence>MGQKIHPTGFRLAVSRNWASRWYANNNNFAAMLQEDIGVREYLKKKLKNASVGRVVIERPAKNARITIFSSRPGVVIGKKGEDIELLKSELQKRMGVPVHVNIEEIRKPETDAQLIADSITQQLERRIMFRRAMKRAMQNAMRLGAQGIKIMSAGRLNGIEIARTEWYREGRVPLHTLRADIDYATSEAKTTYGIIGVKVWVYKGDTLGRNDAPVVEEVAEEKRPRRNARPGGDRRPRRDGEGGGPAGARRGAPRRAGGAGGDGKTGE</sequence>